<name>CTXA2_CERCA</name>
<keyword id="KW-0044">Antibiotic</keyword>
<keyword id="KW-0929">Antimicrobial</keyword>
<keyword id="KW-0165">Cleavage on pair of basic residues</keyword>
<keyword id="KW-0204">Cytolysis</keyword>
<keyword id="KW-0903">Direct protein sequencing</keyword>
<keyword id="KW-0354">Hemolysis</keyword>
<keyword id="KW-0391">Immunity</keyword>
<keyword id="KW-0399">Innate immunity</keyword>
<keyword id="KW-0964">Secreted</keyword>
<keyword id="KW-0732">Signal</keyword>
<protein>
    <recommendedName>
        <fullName>Ceratotoxin-A</fullName>
    </recommendedName>
</protein>
<reference key="1">
    <citation type="journal article" date="1997" name="Insect Biochem. Mol. Biol.">
        <title>The genes encoding the antibacterial sex-specific peptides ceratotoxins are clustered in the genome of the medfly Ceratitis capitata.</title>
        <authorList>
            <person name="Rosetto M."/>
            <person name="de Filippis T."/>
            <person name="Manetti A.G.O."/>
            <person name="Marchini D."/>
            <person name="Baldari C.T."/>
            <person name="Dallai R."/>
        </authorList>
    </citation>
    <scope>NUCLEOTIDE SEQUENCE [GENOMIC DNA]</scope>
    <source>
        <tissue>Female accessory gland</tissue>
    </source>
</reference>
<reference key="2">
    <citation type="journal article" date="1993" name="Insect Biochem. Mol. Biol.">
        <title>Purification and primary structure of ceratotoxin A and B, two antibacterial peptides from the female reproductive accessory glands of the medfly Ceratitis capitata (Insecta: Diptera).</title>
        <authorList>
            <person name="Marchini D."/>
            <person name="Giordano P.C."/>
            <person name="Amons R."/>
            <person name="Bernini L.F."/>
            <person name="Dallai R."/>
        </authorList>
    </citation>
    <scope>PROTEIN SEQUENCE OF 36-64</scope>
    <source>
        <tissue>Female accessory gland</tissue>
    </source>
</reference>
<comment type="function">
    <text>Female-specific peptides with potent activity against Gram-positive and Gram-negative bacteria. They have as well hemolytic activity.</text>
</comment>
<comment type="biophysicochemical properties">
    <temperatureDependence>
        <text>Thermostable. Still active at 100 degrees Celsius.</text>
    </temperatureDependence>
</comment>
<comment type="subunit">
    <text>Homomer of four to six subunits.</text>
</comment>
<comment type="subcellular location">
    <subcellularLocation>
        <location>Secreted</location>
    </subcellularLocation>
</comment>
<dbReference type="EMBL" id="Y15373">
    <property type="protein sequence ID" value="CAA75595.1"/>
    <property type="molecule type" value="Genomic_DNA"/>
</dbReference>
<dbReference type="SMR" id="O17512"/>
<dbReference type="GO" id="GO:0005576">
    <property type="term" value="C:extracellular region"/>
    <property type="evidence" value="ECO:0007669"/>
    <property type="project" value="UniProtKB-SubCell"/>
</dbReference>
<dbReference type="GO" id="GO:0042742">
    <property type="term" value="P:defense response to bacterium"/>
    <property type="evidence" value="ECO:0007669"/>
    <property type="project" value="UniProtKB-KW"/>
</dbReference>
<dbReference type="GO" id="GO:0045087">
    <property type="term" value="P:innate immune response"/>
    <property type="evidence" value="ECO:0007669"/>
    <property type="project" value="UniProtKB-KW"/>
</dbReference>
<dbReference type="GO" id="GO:0031640">
    <property type="term" value="P:killing of cells of another organism"/>
    <property type="evidence" value="ECO:0007669"/>
    <property type="project" value="UniProtKB-KW"/>
</dbReference>
<feature type="signal peptide" evidence="1">
    <location>
        <begin position="1"/>
        <end position="23"/>
    </location>
</feature>
<feature type="propeptide" id="PRO_0000004967" evidence="2">
    <location>
        <begin position="24"/>
        <end position="35"/>
    </location>
</feature>
<feature type="peptide" id="PRO_0000004968" description="Ceratotoxin-A">
    <location>
        <begin position="36"/>
        <end position="64"/>
    </location>
</feature>
<feature type="propeptide" id="PRO_0000004969">
    <location>
        <begin position="65"/>
        <end position="71"/>
    </location>
</feature>
<gene>
    <name type="primary">CTXA2</name>
</gene>
<organism>
    <name type="scientific">Ceratitis capitata</name>
    <name type="common">Mediterranean fruit fly</name>
    <name type="synonym">Tephritis capitata</name>
    <dbReference type="NCBI Taxonomy" id="7213"/>
    <lineage>
        <taxon>Eukaryota</taxon>
        <taxon>Metazoa</taxon>
        <taxon>Ecdysozoa</taxon>
        <taxon>Arthropoda</taxon>
        <taxon>Hexapoda</taxon>
        <taxon>Insecta</taxon>
        <taxon>Pterygota</taxon>
        <taxon>Neoptera</taxon>
        <taxon>Endopterygota</taxon>
        <taxon>Diptera</taxon>
        <taxon>Brachycera</taxon>
        <taxon>Muscomorpha</taxon>
        <taxon>Tephritoidea</taxon>
        <taxon>Tephritidae</taxon>
        <taxon>Ceratitis</taxon>
        <taxon>Ceratitis</taxon>
    </lineage>
</organism>
<evidence type="ECO:0000255" key="1"/>
<evidence type="ECO:0000269" key="2">
    <source>
    </source>
</evidence>
<accession>O17512</accession>
<sequence>MANLKAVFLICIVAFIAFQCVVAEPAAEDSIVVKRSIGSALKKALPVAKKIGKIALPIAKAALPVAAGLVG</sequence>
<proteinExistence type="evidence at protein level"/>